<evidence type="ECO:0000255" key="1">
    <source>
        <dbReference type="HAMAP-Rule" id="MF_00501"/>
    </source>
</evidence>
<evidence type="ECO:0000256" key="2">
    <source>
        <dbReference type="SAM" id="MobiDB-lite"/>
    </source>
</evidence>
<evidence type="ECO:0000305" key="3"/>
<keyword id="KW-0687">Ribonucleoprotein</keyword>
<keyword id="KW-0689">Ribosomal protein</keyword>
<keyword id="KW-0694">RNA-binding</keyword>
<keyword id="KW-0699">rRNA-binding</keyword>
<protein>
    <recommendedName>
        <fullName evidence="1">Large ribosomal subunit protein bL31</fullName>
    </recommendedName>
    <alternativeName>
        <fullName evidence="3">50S ribosomal protein L31</fullName>
    </alternativeName>
</protein>
<sequence>MKANIHPQFETVEVSCATCGKQHPIGTTVTSIKIETCSNCHPFYTGAQTFVVKAGPVDKFNKRYGITQDQKVKTVSSNADNQKETTEELIKNK</sequence>
<comment type="function">
    <text evidence="1">Binds the 23S rRNA.</text>
</comment>
<comment type="subunit">
    <text evidence="1">Part of the 50S ribosomal subunit.</text>
</comment>
<comment type="similarity">
    <text evidence="1">Belongs to the bacterial ribosomal protein bL31 family. Type A subfamily.</text>
</comment>
<feature type="chain" id="PRO_0000173139" description="Large ribosomal subunit protein bL31">
    <location>
        <begin position="1"/>
        <end position="93"/>
    </location>
</feature>
<feature type="region of interest" description="Disordered" evidence="2">
    <location>
        <begin position="72"/>
        <end position="93"/>
    </location>
</feature>
<feature type="compositionally biased region" description="Basic and acidic residues" evidence="2">
    <location>
        <begin position="81"/>
        <end position="93"/>
    </location>
</feature>
<proteinExistence type="inferred from homology"/>
<organism>
    <name type="scientific">Onion yellows phytoplasma (strain OY-M)</name>
    <dbReference type="NCBI Taxonomy" id="262768"/>
    <lineage>
        <taxon>Bacteria</taxon>
        <taxon>Bacillati</taxon>
        <taxon>Mycoplasmatota</taxon>
        <taxon>Mollicutes</taxon>
        <taxon>Acholeplasmatales</taxon>
        <taxon>Acholeplasmataceae</taxon>
        <taxon>Candidatus Phytoplasma</taxon>
        <taxon>16SrI (Aster yellows group)</taxon>
    </lineage>
</organism>
<dbReference type="EMBL" id="AP006628">
    <property type="protein sequence ID" value="BAD04190.1"/>
    <property type="molecule type" value="Genomic_DNA"/>
</dbReference>
<dbReference type="SMR" id="Q6YRB0"/>
<dbReference type="STRING" id="262768.PAM_105"/>
<dbReference type="KEGG" id="poy:PAM_105"/>
<dbReference type="eggNOG" id="COG0254">
    <property type="taxonomic scope" value="Bacteria"/>
</dbReference>
<dbReference type="HOGENOM" id="CLU_114306_4_3_14"/>
<dbReference type="BioCyc" id="OYEL262768:G1G26-136-MONOMER"/>
<dbReference type="Proteomes" id="UP000002523">
    <property type="component" value="Chromosome"/>
</dbReference>
<dbReference type="GO" id="GO:1990904">
    <property type="term" value="C:ribonucleoprotein complex"/>
    <property type="evidence" value="ECO:0007669"/>
    <property type="project" value="UniProtKB-KW"/>
</dbReference>
<dbReference type="GO" id="GO:0005840">
    <property type="term" value="C:ribosome"/>
    <property type="evidence" value="ECO:0007669"/>
    <property type="project" value="UniProtKB-KW"/>
</dbReference>
<dbReference type="GO" id="GO:0019843">
    <property type="term" value="F:rRNA binding"/>
    <property type="evidence" value="ECO:0007669"/>
    <property type="project" value="UniProtKB-KW"/>
</dbReference>
<dbReference type="GO" id="GO:0003735">
    <property type="term" value="F:structural constituent of ribosome"/>
    <property type="evidence" value="ECO:0007669"/>
    <property type="project" value="InterPro"/>
</dbReference>
<dbReference type="GO" id="GO:0006412">
    <property type="term" value="P:translation"/>
    <property type="evidence" value="ECO:0007669"/>
    <property type="project" value="UniProtKB-UniRule"/>
</dbReference>
<dbReference type="Gene3D" id="4.10.830.30">
    <property type="entry name" value="Ribosomal protein L31"/>
    <property type="match status" value="1"/>
</dbReference>
<dbReference type="HAMAP" id="MF_00501">
    <property type="entry name" value="Ribosomal_bL31_1"/>
    <property type="match status" value="1"/>
</dbReference>
<dbReference type="InterPro" id="IPR034704">
    <property type="entry name" value="Ribosomal_bL28/bL31-like_sf"/>
</dbReference>
<dbReference type="InterPro" id="IPR002150">
    <property type="entry name" value="Ribosomal_bL31"/>
</dbReference>
<dbReference type="InterPro" id="IPR027491">
    <property type="entry name" value="Ribosomal_bL31_A"/>
</dbReference>
<dbReference type="InterPro" id="IPR042105">
    <property type="entry name" value="Ribosomal_bL31_sf"/>
</dbReference>
<dbReference type="NCBIfam" id="TIGR00105">
    <property type="entry name" value="L31"/>
    <property type="match status" value="1"/>
</dbReference>
<dbReference type="NCBIfam" id="NF000612">
    <property type="entry name" value="PRK00019.1"/>
    <property type="match status" value="1"/>
</dbReference>
<dbReference type="PANTHER" id="PTHR33280">
    <property type="entry name" value="50S RIBOSOMAL PROTEIN L31, CHLOROPLASTIC"/>
    <property type="match status" value="1"/>
</dbReference>
<dbReference type="PANTHER" id="PTHR33280:SF1">
    <property type="entry name" value="LARGE RIBOSOMAL SUBUNIT PROTEIN BL31C"/>
    <property type="match status" value="1"/>
</dbReference>
<dbReference type="Pfam" id="PF01197">
    <property type="entry name" value="Ribosomal_L31"/>
    <property type="match status" value="1"/>
</dbReference>
<dbReference type="PRINTS" id="PR01249">
    <property type="entry name" value="RIBOSOMALL31"/>
</dbReference>
<dbReference type="SUPFAM" id="SSF143800">
    <property type="entry name" value="L28p-like"/>
    <property type="match status" value="1"/>
</dbReference>
<name>RL31_ONYPE</name>
<accession>Q6YRB0</accession>
<reference key="1">
    <citation type="journal article" date="2004" name="Nat. Genet.">
        <title>Reductive evolution suggested from the complete genome sequence of a plant-pathogenic phytoplasma.</title>
        <authorList>
            <person name="Oshima K."/>
            <person name="Kakizawa S."/>
            <person name="Nishigawa H."/>
            <person name="Jung H.-Y."/>
            <person name="Wei W."/>
            <person name="Suzuki S."/>
            <person name="Arashida R."/>
            <person name="Nakata D."/>
            <person name="Miyata S."/>
            <person name="Ugaki M."/>
            <person name="Namba S."/>
        </authorList>
    </citation>
    <scope>NUCLEOTIDE SEQUENCE [LARGE SCALE GENOMIC DNA]</scope>
    <source>
        <strain>OY-M</strain>
    </source>
</reference>
<gene>
    <name evidence="1" type="primary">rpmE</name>
    <name type="ordered locus">PAM_105</name>
</gene>